<protein>
    <recommendedName>
        <fullName evidence="1">NADH-quinone oxidoreductase subunit C</fullName>
        <ecNumber evidence="1">7.1.1.-</ecNumber>
    </recommendedName>
    <alternativeName>
        <fullName evidence="1">NADH dehydrogenase I subunit C</fullName>
    </alternativeName>
    <alternativeName>
        <fullName evidence="1">NDH-1 subunit C</fullName>
    </alternativeName>
</protein>
<name>NUOC_PHEZH</name>
<evidence type="ECO:0000255" key="1">
    <source>
        <dbReference type="HAMAP-Rule" id="MF_01357"/>
    </source>
</evidence>
<comment type="function">
    <text evidence="1">NDH-1 shuttles electrons from NADH, via FMN and iron-sulfur (Fe-S) centers, to quinones in the respiratory chain. The immediate electron acceptor for the enzyme in this species is believed to be ubiquinone. Couples the redox reaction to proton translocation (for every two electrons transferred, four hydrogen ions are translocated across the cytoplasmic membrane), and thus conserves the redox energy in a proton gradient.</text>
</comment>
<comment type="catalytic activity">
    <reaction evidence="1">
        <text>a quinone + NADH + 5 H(+)(in) = a quinol + NAD(+) + 4 H(+)(out)</text>
        <dbReference type="Rhea" id="RHEA:57888"/>
        <dbReference type="ChEBI" id="CHEBI:15378"/>
        <dbReference type="ChEBI" id="CHEBI:24646"/>
        <dbReference type="ChEBI" id="CHEBI:57540"/>
        <dbReference type="ChEBI" id="CHEBI:57945"/>
        <dbReference type="ChEBI" id="CHEBI:132124"/>
    </reaction>
</comment>
<comment type="subunit">
    <text evidence="1">NDH-1 is composed of 14 different subunits. Subunits NuoB, C, D, E, F, and G constitute the peripheral sector of the complex.</text>
</comment>
<comment type="subcellular location">
    <subcellularLocation>
        <location evidence="1">Cell inner membrane</location>
        <topology evidence="1">Peripheral membrane protein</topology>
        <orientation evidence="1">Cytoplasmic side</orientation>
    </subcellularLocation>
</comment>
<comment type="similarity">
    <text evidence="1">Belongs to the complex I 30 kDa subunit family.</text>
</comment>
<sequence>MSWPATHDELEALGRELVAGGLGPFGGYEVAFGELSLTGPAHRIVEGLTLLRDDHGFQQLVDICGVDYPERERRFDVVYHLLSFTKNRRIRVKVQADEDTAVPSVTGVYPNADWYEREAFDMYGVFFDGHPDLRRILTDYGFHGHPLRKDFPMTGYVEVRYDDELKRVVYEPVKSVEWRNWDFLSPWEGVERGFAPILPGDEKGEEAKS</sequence>
<feature type="chain" id="PRO_0000358159" description="NADH-quinone oxidoreductase subunit C">
    <location>
        <begin position="1"/>
        <end position="209"/>
    </location>
</feature>
<gene>
    <name evidence="1" type="primary">nuoC</name>
    <name type="ordered locus">PHZ_c1803</name>
</gene>
<dbReference type="EC" id="7.1.1.-" evidence="1"/>
<dbReference type="EMBL" id="CP000747">
    <property type="protein sequence ID" value="ACG78214.1"/>
    <property type="molecule type" value="Genomic_DNA"/>
</dbReference>
<dbReference type="RefSeq" id="WP_012522356.1">
    <property type="nucleotide sequence ID" value="NC_011144.1"/>
</dbReference>
<dbReference type="SMR" id="B4RCM7"/>
<dbReference type="STRING" id="450851.PHZ_c1803"/>
<dbReference type="KEGG" id="pzu:PHZ_c1803"/>
<dbReference type="eggNOG" id="COG0852">
    <property type="taxonomic scope" value="Bacteria"/>
</dbReference>
<dbReference type="HOGENOM" id="CLU_042628_2_1_5"/>
<dbReference type="OrthoDB" id="9803286at2"/>
<dbReference type="Proteomes" id="UP000001868">
    <property type="component" value="Chromosome"/>
</dbReference>
<dbReference type="GO" id="GO:0005886">
    <property type="term" value="C:plasma membrane"/>
    <property type="evidence" value="ECO:0007669"/>
    <property type="project" value="UniProtKB-SubCell"/>
</dbReference>
<dbReference type="GO" id="GO:0008137">
    <property type="term" value="F:NADH dehydrogenase (ubiquinone) activity"/>
    <property type="evidence" value="ECO:0007669"/>
    <property type="project" value="InterPro"/>
</dbReference>
<dbReference type="GO" id="GO:0050136">
    <property type="term" value="F:NADH:ubiquinone reductase (non-electrogenic) activity"/>
    <property type="evidence" value="ECO:0007669"/>
    <property type="project" value="UniProtKB-UniRule"/>
</dbReference>
<dbReference type="GO" id="GO:0048038">
    <property type="term" value="F:quinone binding"/>
    <property type="evidence" value="ECO:0007669"/>
    <property type="project" value="UniProtKB-KW"/>
</dbReference>
<dbReference type="Gene3D" id="3.30.460.80">
    <property type="entry name" value="NADH:ubiquinone oxidoreductase, 30kDa subunit"/>
    <property type="match status" value="1"/>
</dbReference>
<dbReference type="HAMAP" id="MF_01357">
    <property type="entry name" value="NDH1_NuoC"/>
    <property type="match status" value="1"/>
</dbReference>
<dbReference type="InterPro" id="IPR010218">
    <property type="entry name" value="NADH_DH_suC"/>
</dbReference>
<dbReference type="InterPro" id="IPR037232">
    <property type="entry name" value="NADH_quin_OxRdtase_su_C/D-like"/>
</dbReference>
<dbReference type="InterPro" id="IPR001268">
    <property type="entry name" value="NADH_UbQ_OxRdtase_30kDa_su"/>
</dbReference>
<dbReference type="InterPro" id="IPR020396">
    <property type="entry name" value="NADH_UbQ_OxRdtase_CS"/>
</dbReference>
<dbReference type="NCBIfam" id="TIGR01961">
    <property type="entry name" value="NuoC_fam"/>
    <property type="match status" value="1"/>
</dbReference>
<dbReference type="NCBIfam" id="NF004733">
    <property type="entry name" value="PRK06074.1-5"/>
    <property type="match status" value="1"/>
</dbReference>
<dbReference type="PANTHER" id="PTHR10884:SF14">
    <property type="entry name" value="NADH DEHYDROGENASE [UBIQUINONE] IRON-SULFUR PROTEIN 3, MITOCHONDRIAL"/>
    <property type="match status" value="1"/>
</dbReference>
<dbReference type="PANTHER" id="PTHR10884">
    <property type="entry name" value="NADH DEHYDROGENASE UBIQUINONE IRON-SULFUR PROTEIN 3"/>
    <property type="match status" value="1"/>
</dbReference>
<dbReference type="Pfam" id="PF00329">
    <property type="entry name" value="Complex1_30kDa"/>
    <property type="match status" value="1"/>
</dbReference>
<dbReference type="SUPFAM" id="SSF143243">
    <property type="entry name" value="Nqo5-like"/>
    <property type="match status" value="1"/>
</dbReference>
<dbReference type="PROSITE" id="PS00542">
    <property type="entry name" value="COMPLEX1_30K"/>
    <property type="match status" value="1"/>
</dbReference>
<accession>B4RCM7</accession>
<reference key="1">
    <citation type="journal article" date="2008" name="BMC Genomics">
        <title>Complete genome of Phenylobacterium zucineum - a novel facultative intracellular bacterium isolated from human erythroleukemia cell line K562.</title>
        <authorList>
            <person name="Luo Y."/>
            <person name="Xu X."/>
            <person name="Ding Z."/>
            <person name="Liu Z."/>
            <person name="Zhang B."/>
            <person name="Yan Z."/>
            <person name="Sun J."/>
            <person name="Hu S."/>
            <person name="Hu X."/>
        </authorList>
    </citation>
    <scope>NUCLEOTIDE SEQUENCE [LARGE SCALE GENOMIC DNA]</scope>
    <source>
        <strain>HLK1</strain>
    </source>
</reference>
<organism>
    <name type="scientific">Phenylobacterium zucineum (strain HLK1)</name>
    <dbReference type="NCBI Taxonomy" id="450851"/>
    <lineage>
        <taxon>Bacteria</taxon>
        <taxon>Pseudomonadati</taxon>
        <taxon>Pseudomonadota</taxon>
        <taxon>Alphaproteobacteria</taxon>
        <taxon>Caulobacterales</taxon>
        <taxon>Caulobacteraceae</taxon>
        <taxon>Phenylobacterium</taxon>
    </lineage>
</organism>
<keyword id="KW-0997">Cell inner membrane</keyword>
<keyword id="KW-1003">Cell membrane</keyword>
<keyword id="KW-0472">Membrane</keyword>
<keyword id="KW-0520">NAD</keyword>
<keyword id="KW-0874">Quinone</keyword>
<keyword id="KW-1185">Reference proteome</keyword>
<keyword id="KW-1278">Translocase</keyword>
<keyword id="KW-0813">Transport</keyword>
<keyword id="KW-0830">Ubiquinone</keyword>
<proteinExistence type="inferred from homology"/>